<dbReference type="EC" id="4.2.3.4" evidence="1"/>
<dbReference type="EMBL" id="CR848038">
    <property type="protein sequence ID" value="CAH64140.1"/>
    <property type="molecule type" value="Genomic_DNA"/>
</dbReference>
<dbReference type="RefSeq" id="WP_011097269.1">
    <property type="nucleotide sequence ID" value="NC_004552.2"/>
</dbReference>
<dbReference type="SMR" id="Q5L5F1"/>
<dbReference type="KEGG" id="cab:CAB693"/>
<dbReference type="eggNOG" id="COG0337">
    <property type="taxonomic scope" value="Bacteria"/>
</dbReference>
<dbReference type="HOGENOM" id="CLU_001201_0_1_0"/>
<dbReference type="OrthoDB" id="9806583at2"/>
<dbReference type="UniPathway" id="UPA00053">
    <property type="reaction ID" value="UER00085"/>
</dbReference>
<dbReference type="Proteomes" id="UP000001012">
    <property type="component" value="Chromosome"/>
</dbReference>
<dbReference type="GO" id="GO:0005737">
    <property type="term" value="C:cytoplasm"/>
    <property type="evidence" value="ECO:0007669"/>
    <property type="project" value="UniProtKB-SubCell"/>
</dbReference>
<dbReference type="GO" id="GO:0003856">
    <property type="term" value="F:3-dehydroquinate synthase activity"/>
    <property type="evidence" value="ECO:0007669"/>
    <property type="project" value="UniProtKB-EC"/>
</dbReference>
<dbReference type="GO" id="GO:0046872">
    <property type="term" value="F:metal ion binding"/>
    <property type="evidence" value="ECO:0007669"/>
    <property type="project" value="UniProtKB-KW"/>
</dbReference>
<dbReference type="GO" id="GO:0000166">
    <property type="term" value="F:nucleotide binding"/>
    <property type="evidence" value="ECO:0007669"/>
    <property type="project" value="UniProtKB-KW"/>
</dbReference>
<dbReference type="GO" id="GO:0008652">
    <property type="term" value="P:amino acid biosynthetic process"/>
    <property type="evidence" value="ECO:0007669"/>
    <property type="project" value="UniProtKB-KW"/>
</dbReference>
<dbReference type="GO" id="GO:0009073">
    <property type="term" value="P:aromatic amino acid family biosynthetic process"/>
    <property type="evidence" value="ECO:0007669"/>
    <property type="project" value="UniProtKB-KW"/>
</dbReference>
<dbReference type="GO" id="GO:0009423">
    <property type="term" value="P:chorismate biosynthetic process"/>
    <property type="evidence" value="ECO:0007669"/>
    <property type="project" value="UniProtKB-UniPathway"/>
</dbReference>
<dbReference type="CDD" id="cd08195">
    <property type="entry name" value="DHQS"/>
    <property type="match status" value="1"/>
</dbReference>
<dbReference type="Gene3D" id="3.40.50.1970">
    <property type="match status" value="1"/>
</dbReference>
<dbReference type="Gene3D" id="1.20.1090.10">
    <property type="entry name" value="Dehydroquinate synthase-like - alpha domain"/>
    <property type="match status" value="1"/>
</dbReference>
<dbReference type="InterPro" id="IPR050071">
    <property type="entry name" value="Dehydroquinate_synthase"/>
</dbReference>
<dbReference type="InterPro" id="IPR016037">
    <property type="entry name" value="DHQ_synth_AroB"/>
</dbReference>
<dbReference type="InterPro" id="IPR030963">
    <property type="entry name" value="DHQ_synth_fam"/>
</dbReference>
<dbReference type="InterPro" id="IPR030960">
    <property type="entry name" value="DHQS/DOIS_N"/>
</dbReference>
<dbReference type="InterPro" id="IPR056179">
    <property type="entry name" value="DHQS_C"/>
</dbReference>
<dbReference type="NCBIfam" id="TIGR01357">
    <property type="entry name" value="aroB"/>
    <property type="match status" value="1"/>
</dbReference>
<dbReference type="PANTHER" id="PTHR43622">
    <property type="entry name" value="3-DEHYDROQUINATE SYNTHASE"/>
    <property type="match status" value="1"/>
</dbReference>
<dbReference type="PANTHER" id="PTHR43622:SF7">
    <property type="entry name" value="3-DEHYDROQUINATE SYNTHASE, CHLOROPLASTIC"/>
    <property type="match status" value="1"/>
</dbReference>
<dbReference type="Pfam" id="PF01761">
    <property type="entry name" value="DHQ_synthase"/>
    <property type="match status" value="1"/>
</dbReference>
<dbReference type="Pfam" id="PF24621">
    <property type="entry name" value="DHQS_C"/>
    <property type="match status" value="1"/>
</dbReference>
<dbReference type="PIRSF" id="PIRSF001455">
    <property type="entry name" value="DHQ_synth"/>
    <property type="match status" value="1"/>
</dbReference>
<dbReference type="SUPFAM" id="SSF56796">
    <property type="entry name" value="Dehydroquinate synthase-like"/>
    <property type="match status" value="1"/>
</dbReference>
<feature type="chain" id="PRO_0000231078" description="3-dehydroquinate synthase">
    <location>
        <begin position="1"/>
        <end position="379"/>
    </location>
</feature>
<feature type="binding site" evidence="2">
    <location>
        <begin position="67"/>
        <end position="72"/>
    </location>
    <ligand>
        <name>NAD(+)</name>
        <dbReference type="ChEBI" id="CHEBI:57540"/>
    </ligand>
</feature>
<feature type="binding site" evidence="2">
    <location>
        <begin position="101"/>
        <end position="105"/>
    </location>
    <ligand>
        <name>NAD(+)</name>
        <dbReference type="ChEBI" id="CHEBI:57540"/>
    </ligand>
</feature>
<feature type="binding site" evidence="2">
    <location>
        <begin position="125"/>
        <end position="126"/>
    </location>
    <ligand>
        <name>NAD(+)</name>
        <dbReference type="ChEBI" id="CHEBI:57540"/>
    </ligand>
</feature>
<feature type="binding site" evidence="2">
    <location>
        <position position="138"/>
    </location>
    <ligand>
        <name>NAD(+)</name>
        <dbReference type="ChEBI" id="CHEBI:57540"/>
    </ligand>
</feature>
<feature type="binding site" evidence="3">
    <location>
        <position position="147"/>
    </location>
    <ligand>
        <name>NAD(+)</name>
        <dbReference type="ChEBI" id="CHEBI:57540"/>
    </ligand>
</feature>
<feature type="binding site" evidence="2">
    <location>
        <position position="180"/>
    </location>
    <ligand>
        <name>Zn(2+)</name>
        <dbReference type="ChEBI" id="CHEBI:29105"/>
    </ligand>
</feature>
<feature type="binding site" evidence="2">
    <location>
        <position position="242"/>
    </location>
    <ligand>
        <name>Zn(2+)</name>
        <dbReference type="ChEBI" id="CHEBI:29105"/>
    </ligand>
</feature>
<feature type="binding site" evidence="2">
    <location>
        <position position="258"/>
    </location>
    <ligand>
        <name>Zn(2+)</name>
        <dbReference type="ChEBI" id="CHEBI:29105"/>
    </ligand>
</feature>
<name>AROB_CHLAB</name>
<gene>
    <name evidence="1" type="primary">aroB</name>
    <name type="ordered locus">CAB693</name>
</gene>
<proteinExistence type="inferred from homology"/>
<reference key="1">
    <citation type="journal article" date="2005" name="Genome Res.">
        <title>The Chlamydophila abortus genome sequence reveals an array of variable proteins that contribute to interspecies variation.</title>
        <authorList>
            <person name="Thomson N.R."/>
            <person name="Yeats C."/>
            <person name="Bell K."/>
            <person name="Holden M.T.G."/>
            <person name="Bentley S.D."/>
            <person name="Livingstone M."/>
            <person name="Cerdeno-Tarraga A.-M."/>
            <person name="Harris B."/>
            <person name="Doggett J."/>
            <person name="Ormond D."/>
            <person name="Mungall K."/>
            <person name="Clarke K."/>
            <person name="Feltwell T."/>
            <person name="Hance Z."/>
            <person name="Sanders M."/>
            <person name="Quail M.A."/>
            <person name="Price C."/>
            <person name="Barrell B.G."/>
            <person name="Parkhill J."/>
            <person name="Longbottom D."/>
        </authorList>
    </citation>
    <scope>NUCLEOTIDE SEQUENCE [LARGE SCALE GENOMIC DNA]</scope>
    <source>
        <strain>DSM 27085 / S26/3</strain>
    </source>
</reference>
<keyword id="KW-0028">Amino-acid biosynthesis</keyword>
<keyword id="KW-0057">Aromatic amino acid biosynthesis</keyword>
<keyword id="KW-0170">Cobalt</keyword>
<keyword id="KW-0963">Cytoplasm</keyword>
<keyword id="KW-0456">Lyase</keyword>
<keyword id="KW-0479">Metal-binding</keyword>
<keyword id="KW-0520">NAD</keyword>
<keyword id="KW-0547">Nucleotide-binding</keyword>
<keyword id="KW-0862">Zinc</keyword>
<evidence type="ECO:0000250" key="1">
    <source>
        <dbReference type="UniProtKB" id="P07639"/>
    </source>
</evidence>
<evidence type="ECO:0000250" key="2">
    <source>
        <dbReference type="UniProtKB" id="P9WPX9"/>
    </source>
</evidence>
<evidence type="ECO:0000250" key="3">
    <source>
        <dbReference type="UniProtKB" id="Q6GGU4"/>
    </source>
</evidence>
<evidence type="ECO:0000305" key="4"/>
<sequence length="379" mass="42485">MIENLISHPHHIKLVGDFFNKKLFSSISTDHPLVILTDVQVAKEILPPIVDFIHSLDYTVVPLSFPSGEKNKTWETFISLQNQLIDHDIPLGSTMIGIGGGVVLDMVGFLASTYCRGIPLFLVPTTMTAMIDACIGGKNGINLRGLKNRLGTFYLPQDVWICPEFLSTLPKKEWLYGISEAIKHGCIADASIWEFLHNYGDMLFSSREILSEFIKRNCLVKAAIVAKDPHDQHLRKILNFGHTIAHAIETLSQGCLPHGLAVSVGMMIETKISLESGIMKNPALLEQLHHLSKRFHLPTTLEELRDLIPQHLHHEFYDPENIIHALGYDKKNLSKKAIRMVMMEDAGKATSCNGIYCTVPKMAILYEILKSECYAMCNN</sequence>
<accession>Q5L5F1</accession>
<protein>
    <recommendedName>
        <fullName evidence="1">3-dehydroquinate synthase</fullName>
        <shortName evidence="1">DHQS</shortName>
        <ecNumber evidence="1">4.2.3.4</ecNumber>
    </recommendedName>
</protein>
<comment type="function">
    <text evidence="1">Catalyzes the conversion of 3-deoxy-D-arabino-heptulosonate 7-phosphate (DAHP) to dehydroquinate (DHQ).</text>
</comment>
<comment type="catalytic activity">
    <reaction evidence="1">
        <text>7-phospho-2-dehydro-3-deoxy-D-arabino-heptonate = 3-dehydroquinate + phosphate</text>
        <dbReference type="Rhea" id="RHEA:21968"/>
        <dbReference type="ChEBI" id="CHEBI:32364"/>
        <dbReference type="ChEBI" id="CHEBI:43474"/>
        <dbReference type="ChEBI" id="CHEBI:58394"/>
        <dbReference type="EC" id="4.2.3.4"/>
    </reaction>
</comment>
<comment type="cofactor">
    <cofactor evidence="1">
        <name>NAD(+)</name>
        <dbReference type="ChEBI" id="CHEBI:57540"/>
    </cofactor>
</comment>
<comment type="cofactor">
    <cofactor evidence="1">
        <name>Co(2+)</name>
        <dbReference type="ChEBI" id="CHEBI:48828"/>
    </cofactor>
    <cofactor evidence="1">
        <name>Zn(2+)</name>
        <dbReference type="ChEBI" id="CHEBI:29105"/>
    </cofactor>
    <text evidence="1">Binds 1 divalent metal cation per subunit. Can use either Co(2+) or Zn(2+).</text>
</comment>
<comment type="pathway">
    <text evidence="1">Metabolic intermediate biosynthesis; chorismate biosynthesis; chorismate from D-erythrose 4-phosphate and phosphoenolpyruvate: step 2/7.</text>
</comment>
<comment type="subcellular location">
    <subcellularLocation>
        <location evidence="1">Cytoplasm</location>
    </subcellularLocation>
</comment>
<comment type="similarity">
    <text evidence="4">Belongs to the sugar phosphate cyclases superfamily. Dehydroquinate synthase family.</text>
</comment>
<organism>
    <name type="scientific">Chlamydia abortus (strain DSM 27085 / S26/3)</name>
    <name type="common">Chlamydophila abortus</name>
    <dbReference type="NCBI Taxonomy" id="218497"/>
    <lineage>
        <taxon>Bacteria</taxon>
        <taxon>Pseudomonadati</taxon>
        <taxon>Chlamydiota</taxon>
        <taxon>Chlamydiia</taxon>
        <taxon>Chlamydiales</taxon>
        <taxon>Chlamydiaceae</taxon>
        <taxon>Chlamydia/Chlamydophila group</taxon>
        <taxon>Chlamydia</taxon>
    </lineage>
</organism>